<dbReference type="EMBL" id="BA000018">
    <property type="protein sequence ID" value="BAB43192.1"/>
    <property type="molecule type" value="Genomic_DNA"/>
</dbReference>
<dbReference type="PIR" id="G90003">
    <property type="entry name" value="G90003"/>
</dbReference>
<dbReference type="RefSeq" id="WP_000241344.1">
    <property type="nucleotide sequence ID" value="NC_002745.2"/>
</dbReference>
<dbReference type="SMR" id="P99109"/>
<dbReference type="EnsemblBacteria" id="BAB43192">
    <property type="protein sequence ID" value="BAB43192"/>
    <property type="gene ID" value="BAB43192"/>
</dbReference>
<dbReference type="KEGG" id="sau:SA1908"/>
<dbReference type="HOGENOM" id="CLU_085114_4_1_9"/>
<dbReference type="GO" id="GO:0005886">
    <property type="term" value="C:plasma membrane"/>
    <property type="evidence" value="ECO:0007669"/>
    <property type="project" value="UniProtKB-SubCell"/>
</dbReference>
<dbReference type="GO" id="GO:0045259">
    <property type="term" value="C:proton-transporting ATP synthase complex"/>
    <property type="evidence" value="ECO:0007669"/>
    <property type="project" value="UniProtKB-KW"/>
</dbReference>
<dbReference type="GO" id="GO:0046933">
    <property type="term" value="F:proton-transporting ATP synthase activity, rotational mechanism"/>
    <property type="evidence" value="ECO:0007669"/>
    <property type="project" value="UniProtKB-UniRule"/>
</dbReference>
<dbReference type="Gene3D" id="1.10.520.20">
    <property type="entry name" value="N-terminal domain of the delta subunit of the F1F0-ATP synthase"/>
    <property type="match status" value="1"/>
</dbReference>
<dbReference type="HAMAP" id="MF_01416">
    <property type="entry name" value="ATP_synth_delta_bact"/>
    <property type="match status" value="1"/>
</dbReference>
<dbReference type="InterPro" id="IPR026015">
    <property type="entry name" value="ATP_synth_OSCP/delta_N_sf"/>
</dbReference>
<dbReference type="InterPro" id="IPR020781">
    <property type="entry name" value="ATPase_OSCP/d_CS"/>
</dbReference>
<dbReference type="InterPro" id="IPR000711">
    <property type="entry name" value="ATPase_OSCP/dsu"/>
</dbReference>
<dbReference type="NCBIfam" id="TIGR01145">
    <property type="entry name" value="ATP_synt_delta"/>
    <property type="match status" value="1"/>
</dbReference>
<dbReference type="NCBIfam" id="NF004399">
    <property type="entry name" value="PRK05758.1-1"/>
    <property type="match status" value="1"/>
</dbReference>
<dbReference type="PANTHER" id="PTHR11910">
    <property type="entry name" value="ATP SYNTHASE DELTA CHAIN"/>
    <property type="match status" value="1"/>
</dbReference>
<dbReference type="Pfam" id="PF00213">
    <property type="entry name" value="OSCP"/>
    <property type="match status" value="1"/>
</dbReference>
<dbReference type="PRINTS" id="PR00125">
    <property type="entry name" value="ATPASEDELTA"/>
</dbReference>
<dbReference type="SUPFAM" id="SSF47928">
    <property type="entry name" value="N-terminal domain of the delta subunit of the F1F0-ATP synthase"/>
    <property type="match status" value="1"/>
</dbReference>
<dbReference type="PROSITE" id="PS00389">
    <property type="entry name" value="ATPASE_DELTA"/>
    <property type="match status" value="1"/>
</dbReference>
<proteinExistence type="evidence at protein level"/>
<feature type="chain" id="PRO_0000193482" description="ATP synthase subunit delta">
    <location>
        <begin position="1"/>
        <end position="179"/>
    </location>
</feature>
<evidence type="ECO:0000255" key="1">
    <source>
        <dbReference type="HAMAP-Rule" id="MF_01416"/>
    </source>
</evidence>
<organism>
    <name type="scientific">Staphylococcus aureus (strain N315)</name>
    <dbReference type="NCBI Taxonomy" id="158879"/>
    <lineage>
        <taxon>Bacteria</taxon>
        <taxon>Bacillati</taxon>
        <taxon>Bacillota</taxon>
        <taxon>Bacilli</taxon>
        <taxon>Bacillales</taxon>
        <taxon>Staphylococcaceae</taxon>
        <taxon>Staphylococcus</taxon>
    </lineage>
</organism>
<reference key="1">
    <citation type="journal article" date="2001" name="Lancet">
        <title>Whole genome sequencing of meticillin-resistant Staphylococcus aureus.</title>
        <authorList>
            <person name="Kuroda M."/>
            <person name="Ohta T."/>
            <person name="Uchiyama I."/>
            <person name="Baba T."/>
            <person name="Yuzawa H."/>
            <person name="Kobayashi I."/>
            <person name="Cui L."/>
            <person name="Oguchi A."/>
            <person name="Aoki K."/>
            <person name="Nagai Y."/>
            <person name="Lian J.-Q."/>
            <person name="Ito T."/>
            <person name="Kanamori M."/>
            <person name="Matsumaru H."/>
            <person name="Maruyama A."/>
            <person name="Murakami H."/>
            <person name="Hosoyama A."/>
            <person name="Mizutani-Ui Y."/>
            <person name="Takahashi N.K."/>
            <person name="Sawano T."/>
            <person name="Inoue R."/>
            <person name="Kaito C."/>
            <person name="Sekimizu K."/>
            <person name="Hirakawa H."/>
            <person name="Kuhara S."/>
            <person name="Goto S."/>
            <person name="Yabuzaki J."/>
            <person name="Kanehisa M."/>
            <person name="Yamashita A."/>
            <person name="Oshima K."/>
            <person name="Furuya K."/>
            <person name="Yoshino C."/>
            <person name="Shiba T."/>
            <person name="Hattori M."/>
            <person name="Ogasawara N."/>
            <person name="Hayashi H."/>
            <person name="Hiramatsu K."/>
        </authorList>
    </citation>
    <scope>NUCLEOTIDE SEQUENCE [LARGE SCALE GENOMIC DNA]</scope>
    <source>
        <strain>N315</strain>
    </source>
</reference>
<reference key="2">
    <citation type="journal article" date="2005" name="J. Microbiol. Methods">
        <title>Correlation of proteomic and transcriptomic profiles of Staphylococcus aureus during the post-exponential phase of growth.</title>
        <authorList>
            <person name="Scherl A."/>
            <person name="Francois P."/>
            <person name="Bento M."/>
            <person name="Deshusses J.M."/>
            <person name="Charbonnier Y."/>
            <person name="Converset V."/>
            <person name="Huyghe A."/>
            <person name="Walter N."/>
            <person name="Hoogland C."/>
            <person name="Appel R.D."/>
            <person name="Sanchez J.-C."/>
            <person name="Zimmermann-Ivol C.G."/>
            <person name="Corthals G.L."/>
            <person name="Hochstrasser D.F."/>
            <person name="Schrenzel J."/>
        </authorList>
    </citation>
    <scope>IDENTIFICATION BY MASS SPECTROMETRY</scope>
    <source>
        <strain>N315</strain>
    </source>
</reference>
<reference key="3">
    <citation type="submission" date="2007-10" db="UniProtKB">
        <title>Shotgun proteomic analysis of total and membrane protein extracts of S. aureus strain N315.</title>
        <authorList>
            <person name="Vaezzadeh A.R."/>
            <person name="Deshusses J."/>
            <person name="Lescuyer P."/>
            <person name="Hochstrasser D.F."/>
        </authorList>
    </citation>
    <scope>IDENTIFICATION BY MASS SPECTROMETRY [LARGE SCALE ANALYSIS]</scope>
    <source>
        <strain>N315</strain>
    </source>
</reference>
<gene>
    <name evidence="1" type="primary">atpH</name>
    <name type="ordered locus">SA1908</name>
</gene>
<sequence>MVKVANKYAKALFDVSLDTNNLETINEELTVINEAVKDKIEQLKMVDSNPTQTAEQRRELINGVFTDINPYIKNMMYVLADNRHISLIADVFKAFQSLYNGHYNQDFATIESTYELSQEELDKIVKLVTQQTKLSKVIVDTKINPDLIGGFRVKVGTTVLDGSVRNDLVQLQRKFRRVN</sequence>
<keyword id="KW-0066">ATP synthesis</keyword>
<keyword id="KW-1003">Cell membrane</keyword>
<keyword id="KW-0139">CF(1)</keyword>
<keyword id="KW-0375">Hydrogen ion transport</keyword>
<keyword id="KW-0406">Ion transport</keyword>
<keyword id="KW-0472">Membrane</keyword>
<keyword id="KW-0813">Transport</keyword>
<comment type="function">
    <text evidence="1">F(1)F(0) ATP synthase produces ATP from ADP in the presence of a proton or sodium gradient. F-type ATPases consist of two structural domains, F(1) containing the extramembraneous catalytic core and F(0) containing the membrane proton channel, linked together by a central stalk and a peripheral stalk. During catalysis, ATP synthesis in the catalytic domain of F(1) is coupled via a rotary mechanism of the central stalk subunits to proton translocation.</text>
</comment>
<comment type="function">
    <text evidence="1">This protein is part of the stalk that links CF(0) to CF(1). It either transmits conformational changes from CF(0) to CF(1) or is implicated in proton conduction.</text>
</comment>
<comment type="subunit">
    <text evidence="1">F-type ATPases have 2 components, F(1) - the catalytic core - and F(0) - the membrane proton channel. F(1) has five subunits: alpha(3), beta(3), gamma(1), delta(1), epsilon(1). F(0) has three main subunits: a(1), b(2) and c(10-14). The alpha and beta chains form an alternating ring which encloses part of the gamma chain. F(1) is attached to F(0) by a central stalk formed by the gamma and epsilon chains, while a peripheral stalk is formed by the delta and b chains.</text>
</comment>
<comment type="subcellular location">
    <subcellularLocation>
        <location evidence="1">Cell membrane</location>
        <topology evidence="1">Peripheral membrane protein</topology>
    </subcellularLocation>
</comment>
<comment type="similarity">
    <text evidence="1">Belongs to the ATPase delta chain family.</text>
</comment>
<name>ATPD_STAAN</name>
<accession>P99109</accession>
<accession>Q99SF2</accession>
<protein>
    <recommendedName>
        <fullName evidence="1">ATP synthase subunit delta</fullName>
    </recommendedName>
    <alternativeName>
        <fullName evidence="1">ATP synthase F(1) sector subunit delta</fullName>
    </alternativeName>
    <alternativeName>
        <fullName evidence="1">F-type ATPase subunit delta</fullName>
        <shortName evidence="1">F-ATPase subunit delta</shortName>
    </alternativeName>
</protein>